<keyword id="KW-0687">Ribonucleoprotein</keyword>
<keyword id="KW-0689">Ribosomal protein</keyword>
<keyword id="KW-0694">RNA-binding</keyword>
<keyword id="KW-0699">rRNA-binding</keyword>
<proteinExistence type="inferred from homology"/>
<protein>
    <recommendedName>
        <fullName evidence="1">Large ribosomal subunit protein bL20</fullName>
    </recommendedName>
    <alternativeName>
        <fullName evidence="2">50S ribosomal protein L20</fullName>
    </alternativeName>
</protein>
<feature type="chain" id="PRO_1000122274" description="Large ribosomal subunit protein bL20">
    <location>
        <begin position="1"/>
        <end position="118"/>
    </location>
</feature>
<dbReference type="EMBL" id="CP000903">
    <property type="protein sequence ID" value="ABY45563.1"/>
    <property type="molecule type" value="Genomic_DNA"/>
</dbReference>
<dbReference type="RefSeq" id="WP_001138364.1">
    <property type="nucleotide sequence ID" value="NZ_CAKMRX030000126.1"/>
</dbReference>
<dbReference type="SMR" id="A9VJN6"/>
<dbReference type="GeneID" id="92798838"/>
<dbReference type="KEGG" id="bwe:BcerKBAB4_4404"/>
<dbReference type="eggNOG" id="COG0292">
    <property type="taxonomic scope" value="Bacteria"/>
</dbReference>
<dbReference type="HOGENOM" id="CLU_123265_0_1_9"/>
<dbReference type="Proteomes" id="UP000002154">
    <property type="component" value="Chromosome"/>
</dbReference>
<dbReference type="GO" id="GO:1990904">
    <property type="term" value="C:ribonucleoprotein complex"/>
    <property type="evidence" value="ECO:0007669"/>
    <property type="project" value="UniProtKB-KW"/>
</dbReference>
<dbReference type="GO" id="GO:0005840">
    <property type="term" value="C:ribosome"/>
    <property type="evidence" value="ECO:0007669"/>
    <property type="project" value="UniProtKB-KW"/>
</dbReference>
<dbReference type="GO" id="GO:0019843">
    <property type="term" value="F:rRNA binding"/>
    <property type="evidence" value="ECO:0007669"/>
    <property type="project" value="UniProtKB-UniRule"/>
</dbReference>
<dbReference type="GO" id="GO:0003735">
    <property type="term" value="F:structural constituent of ribosome"/>
    <property type="evidence" value="ECO:0007669"/>
    <property type="project" value="InterPro"/>
</dbReference>
<dbReference type="GO" id="GO:0000027">
    <property type="term" value="P:ribosomal large subunit assembly"/>
    <property type="evidence" value="ECO:0007669"/>
    <property type="project" value="UniProtKB-UniRule"/>
</dbReference>
<dbReference type="GO" id="GO:0006412">
    <property type="term" value="P:translation"/>
    <property type="evidence" value="ECO:0007669"/>
    <property type="project" value="InterPro"/>
</dbReference>
<dbReference type="CDD" id="cd07026">
    <property type="entry name" value="Ribosomal_L20"/>
    <property type="match status" value="1"/>
</dbReference>
<dbReference type="FunFam" id="1.10.1900.20:FF:000001">
    <property type="entry name" value="50S ribosomal protein L20"/>
    <property type="match status" value="1"/>
</dbReference>
<dbReference type="Gene3D" id="6.10.160.10">
    <property type="match status" value="1"/>
</dbReference>
<dbReference type="Gene3D" id="1.10.1900.20">
    <property type="entry name" value="Ribosomal protein L20"/>
    <property type="match status" value="1"/>
</dbReference>
<dbReference type="HAMAP" id="MF_00382">
    <property type="entry name" value="Ribosomal_bL20"/>
    <property type="match status" value="1"/>
</dbReference>
<dbReference type="InterPro" id="IPR005813">
    <property type="entry name" value="Ribosomal_bL20"/>
</dbReference>
<dbReference type="InterPro" id="IPR049946">
    <property type="entry name" value="RIBOSOMAL_L20_CS"/>
</dbReference>
<dbReference type="InterPro" id="IPR035566">
    <property type="entry name" value="Ribosomal_protein_bL20_C"/>
</dbReference>
<dbReference type="NCBIfam" id="TIGR01032">
    <property type="entry name" value="rplT_bact"/>
    <property type="match status" value="1"/>
</dbReference>
<dbReference type="PANTHER" id="PTHR10986">
    <property type="entry name" value="39S RIBOSOMAL PROTEIN L20"/>
    <property type="match status" value="1"/>
</dbReference>
<dbReference type="Pfam" id="PF00453">
    <property type="entry name" value="Ribosomal_L20"/>
    <property type="match status" value="1"/>
</dbReference>
<dbReference type="PRINTS" id="PR00062">
    <property type="entry name" value="RIBOSOMALL20"/>
</dbReference>
<dbReference type="SUPFAM" id="SSF74731">
    <property type="entry name" value="Ribosomal protein L20"/>
    <property type="match status" value="1"/>
</dbReference>
<dbReference type="PROSITE" id="PS00937">
    <property type="entry name" value="RIBOSOMAL_L20"/>
    <property type="match status" value="1"/>
</dbReference>
<evidence type="ECO:0000255" key="1">
    <source>
        <dbReference type="HAMAP-Rule" id="MF_00382"/>
    </source>
</evidence>
<evidence type="ECO:0000305" key="2"/>
<organism>
    <name type="scientific">Bacillus mycoides (strain KBAB4)</name>
    <name type="common">Bacillus weihenstephanensis</name>
    <dbReference type="NCBI Taxonomy" id="315730"/>
    <lineage>
        <taxon>Bacteria</taxon>
        <taxon>Bacillati</taxon>
        <taxon>Bacillota</taxon>
        <taxon>Bacilli</taxon>
        <taxon>Bacillales</taxon>
        <taxon>Bacillaceae</taxon>
        <taxon>Bacillus</taxon>
        <taxon>Bacillus cereus group</taxon>
    </lineage>
</organism>
<gene>
    <name evidence="1" type="primary">rplT</name>
    <name type="ordered locus">BcerKBAB4_4404</name>
</gene>
<reference key="1">
    <citation type="journal article" date="2008" name="Chem. Biol. Interact.">
        <title>Extending the Bacillus cereus group genomics to putative food-borne pathogens of different toxicity.</title>
        <authorList>
            <person name="Lapidus A."/>
            <person name="Goltsman E."/>
            <person name="Auger S."/>
            <person name="Galleron N."/>
            <person name="Segurens B."/>
            <person name="Dossat C."/>
            <person name="Land M.L."/>
            <person name="Broussolle V."/>
            <person name="Brillard J."/>
            <person name="Guinebretiere M.-H."/>
            <person name="Sanchis V."/>
            <person name="Nguen-the C."/>
            <person name="Lereclus D."/>
            <person name="Richardson P."/>
            <person name="Wincker P."/>
            <person name="Weissenbach J."/>
            <person name="Ehrlich S.D."/>
            <person name="Sorokin A."/>
        </authorList>
    </citation>
    <scope>NUCLEOTIDE SEQUENCE [LARGE SCALE GENOMIC DNA]</scope>
    <source>
        <strain>KBAB4</strain>
    </source>
</reference>
<sequence length="118" mass="13585">MPRVKGGTVTRQRRKKVIKLAKGYYGSKSTLFKVANQQVMKSLMYAFRDRRQKKRDFRKLWITRINAAARMNGLSYSRLMHGLKNAGIEVNRKMLADLAVHDEKAFAELATVAKNNIN</sequence>
<comment type="function">
    <text evidence="1">Binds directly to 23S ribosomal RNA and is necessary for the in vitro assembly process of the 50S ribosomal subunit. It is not involved in the protein synthesizing functions of that subunit.</text>
</comment>
<comment type="similarity">
    <text evidence="1">Belongs to the bacterial ribosomal protein bL20 family.</text>
</comment>
<accession>A9VJN6</accession>
<name>RL20_BACMK</name>